<reference key="1">
    <citation type="submission" date="2004-11" db="EMBL/GenBank/DDBJ databases">
        <authorList>
            <consortium name="The German cDNA consortium"/>
        </authorList>
    </citation>
    <scope>NUCLEOTIDE SEQUENCE [LARGE SCALE MRNA] (ISOFORMS 1 AND 2)</scope>
    <source>
        <tissue>Heart</tissue>
        <tissue>Kidney</tissue>
    </source>
</reference>
<comment type="function">
    <text evidence="2">Palmitoyl thioesterase that catalyzes depalmitoylation of CGAS and KCNMA1. Acts as a regulator of innate immunity by mediating depalmitoylation of CGAS, thereby preventing CGAS homodimerization and cyclic GMP-AMP synthase activity. Does not exhibit phospholipase nor triacylglycerol lipase activity, able to hydrolyze only short chain substrates due to its shallow active site.</text>
</comment>
<comment type="catalytic activity">
    <reaction evidence="2">
        <text>S-hexadecanoyl-L-cysteinyl-[protein] + H2O = L-cysteinyl-[protein] + hexadecanoate + H(+)</text>
        <dbReference type="Rhea" id="RHEA:19233"/>
        <dbReference type="Rhea" id="RHEA-COMP:10131"/>
        <dbReference type="Rhea" id="RHEA-COMP:11032"/>
        <dbReference type="ChEBI" id="CHEBI:7896"/>
        <dbReference type="ChEBI" id="CHEBI:15377"/>
        <dbReference type="ChEBI" id="CHEBI:15378"/>
        <dbReference type="ChEBI" id="CHEBI:29950"/>
        <dbReference type="ChEBI" id="CHEBI:74151"/>
        <dbReference type="EC" id="3.1.2.22"/>
    </reaction>
    <physiologicalReaction direction="left-to-right" evidence="2">
        <dbReference type="Rhea" id="RHEA:19234"/>
    </physiologicalReaction>
</comment>
<comment type="subcellular location">
    <subcellularLocation>
        <location evidence="2">Cytoplasm</location>
        <location evidence="2">Cytosol</location>
    </subcellularLocation>
</comment>
<comment type="alternative products">
    <event type="alternative splicing"/>
    <isoform>
        <id>Q5R8C2-1</id>
        <name>1</name>
        <sequence type="displayed"/>
    </isoform>
    <isoform>
        <id>Q5R8C2-2</id>
        <name>2</name>
        <sequence type="described" ref="VSP_017557"/>
    </isoform>
</comment>
<comment type="similarity">
    <text evidence="4">Belongs to the AB hydrolase superfamily. AB hydrolase 2 family.</text>
</comment>
<organism>
    <name type="scientific">Pongo abelii</name>
    <name type="common">Sumatran orangutan</name>
    <name type="synonym">Pongo pygmaeus abelii</name>
    <dbReference type="NCBI Taxonomy" id="9601"/>
    <lineage>
        <taxon>Eukaryota</taxon>
        <taxon>Metazoa</taxon>
        <taxon>Chordata</taxon>
        <taxon>Craniata</taxon>
        <taxon>Vertebrata</taxon>
        <taxon>Euteleostomi</taxon>
        <taxon>Mammalia</taxon>
        <taxon>Eutheria</taxon>
        <taxon>Euarchontoglires</taxon>
        <taxon>Primates</taxon>
        <taxon>Haplorrhini</taxon>
        <taxon>Catarrhini</taxon>
        <taxon>Hominidae</taxon>
        <taxon>Pongo</taxon>
    </lineage>
</organism>
<proteinExistence type="evidence at transcript level"/>
<feature type="initiator methionine" description="Removed" evidence="2">
    <location>
        <position position="1"/>
    </location>
</feature>
<feature type="chain" id="PRO_0000227559" description="Lysophospholipase-like protein 1">
    <location>
        <begin position="2"/>
        <end position="237"/>
    </location>
</feature>
<feature type="active site" description="Charge relay system" evidence="1">
    <location>
        <position position="124"/>
    </location>
</feature>
<feature type="active site" description="Charge relay system" evidence="2">
    <location>
        <position position="179"/>
    </location>
</feature>
<feature type="active site" description="Charge relay system" evidence="2">
    <location>
        <position position="211"/>
    </location>
</feature>
<feature type="modified residue" description="N-acetylalanine" evidence="2">
    <location>
        <position position="2"/>
    </location>
</feature>
<feature type="splice variant" id="VSP_017557" description="In isoform 2." evidence="3">
    <location>
        <begin position="1"/>
        <end position="68"/>
    </location>
</feature>
<feature type="sequence conflict" description="In Ref. 1; CAH91033." evidence="4" ref="1">
    <original>T</original>
    <variation>R</variation>
    <location>
        <position position="227"/>
    </location>
</feature>
<evidence type="ECO:0000250" key="1">
    <source>
        <dbReference type="UniProtKB" id="O75608"/>
    </source>
</evidence>
<evidence type="ECO:0000250" key="2">
    <source>
        <dbReference type="UniProtKB" id="Q5VWZ2"/>
    </source>
</evidence>
<evidence type="ECO:0000303" key="3">
    <source ref="1"/>
</evidence>
<evidence type="ECO:0000305" key="4"/>
<sequence>MAAASASVLQRCIVSPAGRHSASLIFLHGSGDSGQGLRMWIKQVLNQDLTFQHIKIIYPTAPPRSYTPMKGGISNVWFDRFKITNDCPEHLESIDVMCQVLTDLIDEEVKSGIKKNRILIGGFSMGGSMAMHLAYRNHQDVAGVFALSSFLNKASAVYQALQKSNGVLPELFQCHGTADELVLHSWAEETNSMLKSLGVTTKLHSFPDVYHELSKTELDILKLWILTKLPGEMEKQK</sequence>
<accession>Q5R8C2</accession>
<accession>Q5RB27</accession>
<protein>
    <recommendedName>
        <fullName evidence="2">Lysophospholipase-like protein 1</fullName>
        <ecNumber evidence="2">3.1.2.22</ecNumber>
    </recommendedName>
</protein>
<name>LYPL1_PONAB</name>
<dbReference type="EC" id="3.1.2.22" evidence="2"/>
<dbReference type="EMBL" id="CR858831">
    <property type="protein sequence ID" value="CAH91033.1"/>
    <property type="molecule type" value="mRNA"/>
</dbReference>
<dbReference type="EMBL" id="CR859831">
    <property type="protein sequence ID" value="CAH91988.1"/>
    <property type="molecule type" value="mRNA"/>
</dbReference>
<dbReference type="RefSeq" id="NP_001126154.1">
    <molecule id="Q5R8C2-1"/>
    <property type="nucleotide sequence ID" value="NM_001132682.2"/>
</dbReference>
<dbReference type="RefSeq" id="NP_001128798.2">
    <molecule id="Q5R8C2-2"/>
    <property type="nucleotide sequence ID" value="NM_001135326.2"/>
</dbReference>
<dbReference type="RefSeq" id="NP_001417391.1">
    <molecule id="Q5R8C2-2"/>
    <property type="nucleotide sequence ID" value="NM_001430462.1"/>
</dbReference>
<dbReference type="RefSeq" id="NP_001417392.1">
    <molecule id="Q5R8C2-2"/>
    <property type="nucleotide sequence ID" value="NM_001430463.1"/>
</dbReference>
<dbReference type="RefSeq" id="NP_001417393.1">
    <molecule id="Q5R8C2-2"/>
    <property type="nucleotide sequence ID" value="NM_001430464.1"/>
</dbReference>
<dbReference type="SMR" id="Q5R8C2"/>
<dbReference type="FunCoup" id="Q5R8C2">
    <property type="interactions" value="828"/>
</dbReference>
<dbReference type="STRING" id="9601.ENSPPYP00000000218"/>
<dbReference type="ESTHER" id="ponpy-lypl1">
    <property type="family name" value="LYsophospholipase_carboxylesterase"/>
</dbReference>
<dbReference type="Ensembl" id="ENSPPYT00000000233.2">
    <molecule id="Q5R8C2-1"/>
    <property type="protein sequence ID" value="ENSPPYP00000000218.2"/>
    <property type="gene ID" value="ENSPPYG00000000212.3"/>
</dbReference>
<dbReference type="GeneID" id="100189704"/>
<dbReference type="KEGG" id="pon:100189704"/>
<dbReference type="CTD" id="127018"/>
<dbReference type="eggNOG" id="KOG2112">
    <property type="taxonomic scope" value="Eukaryota"/>
</dbReference>
<dbReference type="GeneTree" id="ENSGT00940000159171"/>
<dbReference type="InParanoid" id="Q5R8C2"/>
<dbReference type="OMA" id="LEYPHIK"/>
<dbReference type="OrthoDB" id="2418081at2759"/>
<dbReference type="Proteomes" id="UP000001595">
    <property type="component" value="Chromosome 1"/>
</dbReference>
<dbReference type="GO" id="GO:0005829">
    <property type="term" value="C:cytosol"/>
    <property type="evidence" value="ECO:0007669"/>
    <property type="project" value="UniProtKB-SubCell"/>
</dbReference>
<dbReference type="GO" id="GO:0052689">
    <property type="term" value="F:carboxylic ester hydrolase activity"/>
    <property type="evidence" value="ECO:0007669"/>
    <property type="project" value="TreeGrafter"/>
</dbReference>
<dbReference type="GO" id="GO:0008474">
    <property type="term" value="F:palmitoyl-(protein) hydrolase activity"/>
    <property type="evidence" value="ECO:0000250"/>
    <property type="project" value="UniProtKB"/>
</dbReference>
<dbReference type="GO" id="GO:0160049">
    <property type="term" value="P:negative regulation of cGAS/STING signaling pathway"/>
    <property type="evidence" value="ECO:0000250"/>
    <property type="project" value="UniProtKB"/>
</dbReference>
<dbReference type="FunFam" id="3.40.50.1820:FF:000139">
    <property type="entry name" value="lysophospholipase-like protein 1"/>
    <property type="match status" value="1"/>
</dbReference>
<dbReference type="Gene3D" id="3.40.50.1820">
    <property type="entry name" value="alpha/beta hydrolase"/>
    <property type="match status" value="1"/>
</dbReference>
<dbReference type="InterPro" id="IPR029058">
    <property type="entry name" value="AB_hydrolase_fold"/>
</dbReference>
<dbReference type="InterPro" id="IPR050565">
    <property type="entry name" value="LYPA1-2/EST-like"/>
</dbReference>
<dbReference type="InterPro" id="IPR003140">
    <property type="entry name" value="PLipase/COase/thioEstase"/>
</dbReference>
<dbReference type="PANTHER" id="PTHR10655:SF17">
    <property type="entry name" value="LYSOPHOSPHOLIPASE-LIKE PROTEIN 1"/>
    <property type="match status" value="1"/>
</dbReference>
<dbReference type="PANTHER" id="PTHR10655">
    <property type="entry name" value="LYSOPHOSPHOLIPASE-RELATED"/>
    <property type="match status" value="1"/>
</dbReference>
<dbReference type="Pfam" id="PF02230">
    <property type="entry name" value="Abhydrolase_2"/>
    <property type="match status" value="1"/>
</dbReference>
<dbReference type="SUPFAM" id="SSF53474">
    <property type="entry name" value="alpha/beta-Hydrolases"/>
    <property type="match status" value="1"/>
</dbReference>
<keyword id="KW-0007">Acetylation</keyword>
<keyword id="KW-0025">Alternative splicing</keyword>
<keyword id="KW-0963">Cytoplasm</keyword>
<keyword id="KW-0378">Hydrolase</keyword>
<keyword id="KW-1185">Reference proteome</keyword>
<gene>
    <name evidence="2" type="primary">LYPLAL1</name>
</gene>